<comment type="function">
    <text evidence="2 3 4">Selenoprotein with thioredoxin reductase-like oxidoreductase activity (By similarity). Protects dopaminergic neurons against oxidative stress and cell death (By similarity). Involved in ADCYAP1/PACAP-induced calcium mobilization and neuroendocrine secretion (By similarity). Plays a role in fibroblast anchorage and redox regulation (By similarity). In gastric smooth muscle, modulates the contraction processes through the regulation of calcium release and MYLK activation (By similarity). In pancreatic islets, involved in the control of glucose homeostasis, contributes to prolonged ADCYAP1/PACAP-induced insulin secretion (By similarity).</text>
</comment>
<comment type="catalytic activity">
    <reaction evidence="4">
        <text>[thioredoxin]-dithiol + NADP(+) = [thioredoxin]-disulfide + NADPH + H(+)</text>
        <dbReference type="Rhea" id="RHEA:20345"/>
        <dbReference type="Rhea" id="RHEA-COMP:10698"/>
        <dbReference type="Rhea" id="RHEA-COMP:10700"/>
        <dbReference type="ChEBI" id="CHEBI:15378"/>
        <dbReference type="ChEBI" id="CHEBI:29950"/>
        <dbReference type="ChEBI" id="CHEBI:50058"/>
        <dbReference type="ChEBI" id="CHEBI:57783"/>
        <dbReference type="ChEBI" id="CHEBI:58349"/>
        <dbReference type="EC" id="1.8.1.9"/>
    </reaction>
</comment>
<comment type="subcellular location">
    <subcellularLocation>
        <location evidence="4">Endoplasmic reticulum membrane</location>
        <topology evidence="5">Single-pass membrane protein</topology>
    </subcellularLocation>
</comment>
<comment type="PTM">
    <text evidence="1">May contain a selenide-sulfide bond between Cys-46 and Sec-49. This bond is speculated to serve as redox-active pair (By similarity).</text>
</comment>
<comment type="similarity">
    <text evidence="6">Belongs to the SelWTH family. Selenoprotein T subfamily.</text>
</comment>
<comment type="sequence caution" evidence="6">
    <conflict type="erroneous termination">
        <sequence resource="EMBL-CDS" id="AAI49083"/>
    </conflict>
    <text>Truncated C-terminus.</text>
</comment>
<accession>A6QP01</accession>
<proteinExistence type="evidence at transcript level"/>
<name>SELT_BOVIN</name>
<evidence type="ECO:0000250" key="1"/>
<evidence type="ECO:0000250" key="2">
    <source>
        <dbReference type="UniProtKB" id="P62341"/>
    </source>
</evidence>
<evidence type="ECO:0000250" key="3">
    <source>
        <dbReference type="UniProtKB" id="P62342"/>
    </source>
</evidence>
<evidence type="ECO:0000250" key="4">
    <source>
        <dbReference type="UniProtKB" id="Q1H5H1"/>
    </source>
</evidence>
<evidence type="ECO:0000255" key="5"/>
<evidence type="ECO:0000305" key="6"/>
<sequence length="195" mass="22248">MRLLLLLLVAASAVVRSDASANLGGVPGKRLKMQYATGPLLKFQICVSUGYRRVFEEYMRVISQRYPDIRIEGENYLPQPIYRHIASFLSVFKLVLIGLIIVGKDPFAFFGMQAPSIWQWGQENKVYACMMVFFLSNMIENQCMSTGAFEITLNDVPVWSKLESGHLPSMQQLVQILDNEMKLNVHMDSIPHHRS</sequence>
<gene>
    <name evidence="2" type="primary">SELENOT</name>
</gene>
<organism>
    <name type="scientific">Bos taurus</name>
    <name type="common">Bovine</name>
    <dbReference type="NCBI Taxonomy" id="9913"/>
    <lineage>
        <taxon>Eukaryota</taxon>
        <taxon>Metazoa</taxon>
        <taxon>Chordata</taxon>
        <taxon>Craniata</taxon>
        <taxon>Vertebrata</taxon>
        <taxon>Euteleostomi</taxon>
        <taxon>Mammalia</taxon>
        <taxon>Eutheria</taxon>
        <taxon>Laurasiatheria</taxon>
        <taxon>Artiodactyla</taxon>
        <taxon>Ruminantia</taxon>
        <taxon>Pecora</taxon>
        <taxon>Bovidae</taxon>
        <taxon>Bovinae</taxon>
        <taxon>Bos</taxon>
    </lineage>
</organism>
<protein>
    <recommendedName>
        <fullName evidence="6">Thioredoxin reductase-like selenoprotein T</fullName>
        <shortName evidence="2">SelT</shortName>
        <ecNumber evidence="4">1.8.1.9</ecNumber>
    </recommendedName>
</protein>
<dbReference type="EC" id="1.8.1.9" evidence="4"/>
<dbReference type="EMBL" id="BC149082">
    <property type="protein sequence ID" value="AAI49083.1"/>
    <property type="status" value="ALT_SEQ"/>
    <property type="molecule type" value="mRNA"/>
</dbReference>
<dbReference type="RefSeq" id="NP_001096573.2">
    <property type="nucleotide sequence ID" value="NM_001103103.2"/>
</dbReference>
<dbReference type="FunCoup" id="A6QP01">
    <property type="interactions" value="2208"/>
</dbReference>
<dbReference type="STRING" id="9913.ENSBTAP00000042037"/>
<dbReference type="PaxDb" id="9913-ENSBTAP00000042037"/>
<dbReference type="GeneID" id="783831"/>
<dbReference type="KEGG" id="bta:783831"/>
<dbReference type="CTD" id="51714"/>
<dbReference type="VEuPathDB" id="HostDB:ENSBTAG00000031435"/>
<dbReference type="eggNOG" id="KOG3286">
    <property type="taxonomic scope" value="Eukaryota"/>
</dbReference>
<dbReference type="InParanoid" id="A6QP01"/>
<dbReference type="OMA" id="LKFQICC"/>
<dbReference type="OrthoDB" id="60822at2759"/>
<dbReference type="Proteomes" id="UP000009136">
    <property type="component" value="Chromosome 1"/>
</dbReference>
<dbReference type="Bgee" id="ENSBTAG00000031435">
    <property type="expression patterns" value="Expressed in prostate gland and 106 other cell types or tissues"/>
</dbReference>
<dbReference type="GO" id="GO:0005783">
    <property type="term" value="C:endoplasmic reticulum"/>
    <property type="evidence" value="ECO:0000250"/>
    <property type="project" value="UniProtKB"/>
</dbReference>
<dbReference type="GO" id="GO:0005789">
    <property type="term" value="C:endoplasmic reticulum membrane"/>
    <property type="evidence" value="ECO:0000250"/>
    <property type="project" value="UniProtKB"/>
</dbReference>
<dbReference type="GO" id="GO:0004791">
    <property type="term" value="F:thioredoxin-disulfide reductase (NADPH) activity"/>
    <property type="evidence" value="ECO:0000250"/>
    <property type="project" value="UniProtKB"/>
</dbReference>
<dbReference type="GO" id="GO:0045454">
    <property type="term" value="P:cell redox homeostasis"/>
    <property type="evidence" value="ECO:0000250"/>
    <property type="project" value="UniProtKB"/>
</dbReference>
<dbReference type="GO" id="GO:0098869">
    <property type="term" value="P:cellular oxidant detoxification"/>
    <property type="evidence" value="ECO:0000250"/>
    <property type="project" value="UniProtKB"/>
</dbReference>
<dbReference type="GO" id="GO:0042593">
    <property type="term" value="P:glucose homeostasis"/>
    <property type="evidence" value="ECO:0000250"/>
    <property type="project" value="UniProtKB"/>
</dbReference>
<dbReference type="GO" id="GO:0035773">
    <property type="term" value="P:insulin secretion involved in cellular response to glucose stimulus"/>
    <property type="evidence" value="ECO:0000250"/>
    <property type="project" value="UniProtKB"/>
</dbReference>
<dbReference type="GO" id="GO:0031016">
    <property type="term" value="P:pancreas development"/>
    <property type="evidence" value="ECO:0000250"/>
    <property type="project" value="UniProtKB"/>
</dbReference>
<dbReference type="GO" id="GO:0007204">
    <property type="term" value="P:positive regulation of cytosolic calcium ion concentration"/>
    <property type="evidence" value="ECO:0000250"/>
    <property type="project" value="UniProtKB"/>
</dbReference>
<dbReference type="GO" id="GO:0060124">
    <property type="term" value="P:positive regulation of growth hormone secretion"/>
    <property type="evidence" value="ECO:0000250"/>
    <property type="project" value="UniProtKB"/>
</dbReference>
<dbReference type="GO" id="GO:0009749">
    <property type="term" value="P:response to glucose"/>
    <property type="evidence" value="ECO:0000250"/>
    <property type="project" value="UniProtKB"/>
</dbReference>
<dbReference type="FunFam" id="3.40.30.10:FF:000085">
    <property type="entry name" value="Selenoprotein T"/>
    <property type="match status" value="1"/>
</dbReference>
<dbReference type="Gene3D" id="3.40.30.10">
    <property type="entry name" value="Glutaredoxin"/>
    <property type="match status" value="1"/>
</dbReference>
<dbReference type="InterPro" id="IPR011893">
    <property type="entry name" value="Selenoprotein_Rdx-typ"/>
</dbReference>
<dbReference type="InterPro" id="IPR019389">
    <property type="entry name" value="Selenoprotein_T"/>
</dbReference>
<dbReference type="InterPro" id="IPR036249">
    <property type="entry name" value="Thioredoxin-like_sf"/>
</dbReference>
<dbReference type="NCBIfam" id="TIGR02174">
    <property type="entry name" value="CXXU_selWTH"/>
    <property type="match status" value="1"/>
</dbReference>
<dbReference type="PANTHER" id="PTHR13544">
    <property type="entry name" value="SELENOPROTEIN T"/>
    <property type="match status" value="1"/>
</dbReference>
<dbReference type="PANTHER" id="PTHR13544:SF0">
    <property type="entry name" value="THIOREDOXIN REDUCTASE-LIKE SELENOPROTEIN T"/>
    <property type="match status" value="1"/>
</dbReference>
<dbReference type="Pfam" id="PF10262">
    <property type="entry name" value="Rdx"/>
    <property type="match status" value="1"/>
</dbReference>
<dbReference type="SUPFAM" id="SSF52833">
    <property type="entry name" value="Thioredoxin-like"/>
    <property type="match status" value="1"/>
</dbReference>
<keyword id="KW-0256">Endoplasmic reticulum</keyword>
<keyword id="KW-0472">Membrane</keyword>
<keyword id="KW-0521">NADP</keyword>
<keyword id="KW-0560">Oxidoreductase</keyword>
<keyword id="KW-0676">Redox-active center</keyword>
<keyword id="KW-1185">Reference proteome</keyword>
<keyword id="KW-0712">Selenocysteine</keyword>
<keyword id="KW-0732">Signal</keyword>
<keyword id="KW-0812">Transmembrane</keyword>
<keyword id="KW-1133">Transmembrane helix</keyword>
<reference key="1">
    <citation type="submission" date="2007-07" db="EMBL/GenBank/DDBJ databases">
        <authorList>
            <consortium name="NIH - Mammalian Gene Collection (MGC) project"/>
        </authorList>
    </citation>
    <scope>NUCLEOTIDE SEQUENCE [LARGE SCALE MRNA]</scope>
    <source>
        <strain>Hereford</strain>
        <tissue>Basal ganglia</tissue>
    </source>
</reference>
<feature type="signal peptide" evidence="5">
    <location>
        <begin position="1"/>
        <end position="19"/>
    </location>
</feature>
<feature type="chain" id="PRO_0000318656" description="Thioredoxin reductase-like selenoprotein T">
    <location>
        <begin position="20"/>
        <end position="195"/>
    </location>
</feature>
<feature type="transmembrane region" description="Helical" evidence="5">
    <location>
        <begin position="85"/>
        <end position="103"/>
    </location>
</feature>
<feature type="non-standard amino acid" description="Selenocysteine">
    <location>
        <position position="49"/>
    </location>
</feature>
<feature type="cross-link" description="Cysteinyl-selenocysteine (Cys-Sec)" evidence="5">
    <location>
        <begin position="46"/>
        <end position="49"/>
    </location>
</feature>